<feature type="chain" id="PRO_0000179035" description="GTPase Der">
    <location>
        <begin position="1"/>
        <end position="476"/>
    </location>
</feature>
<feature type="domain" description="EngA-type G 1">
    <location>
        <begin position="3"/>
        <end position="167"/>
    </location>
</feature>
<feature type="domain" description="EngA-type G 2">
    <location>
        <begin position="205"/>
        <end position="380"/>
    </location>
</feature>
<feature type="domain" description="KH-like" evidence="1">
    <location>
        <begin position="381"/>
        <end position="465"/>
    </location>
</feature>
<feature type="binding site" evidence="1">
    <location>
        <begin position="9"/>
        <end position="16"/>
    </location>
    <ligand>
        <name>GTP</name>
        <dbReference type="ChEBI" id="CHEBI:37565"/>
        <label>1</label>
    </ligand>
</feature>
<feature type="binding site" evidence="1">
    <location>
        <begin position="56"/>
        <end position="60"/>
    </location>
    <ligand>
        <name>GTP</name>
        <dbReference type="ChEBI" id="CHEBI:37565"/>
        <label>1</label>
    </ligand>
</feature>
<feature type="binding site" evidence="1">
    <location>
        <begin position="119"/>
        <end position="122"/>
    </location>
    <ligand>
        <name>GTP</name>
        <dbReference type="ChEBI" id="CHEBI:37565"/>
        <label>1</label>
    </ligand>
</feature>
<feature type="binding site" evidence="1">
    <location>
        <begin position="211"/>
        <end position="218"/>
    </location>
    <ligand>
        <name>GTP</name>
        <dbReference type="ChEBI" id="CHEBI:37565"/>
        <label>2</label>
    </ligand>
</feature>
<feature type="binding site" evidence="1">
    <location>
        <begin position="258"/>
        <end position="262"/>
    </location>
    <ligand>
        <name>GTP</name>
        <dbReference type="ChEBI" id="CHEBI:37565"/>
        <label>2</label>
    </ligand>
</feature>
<feature type="binding site" evidence="1">
    <location>
        <begin position="323"/>
        <end position="326"/>
    </location>
    <ligand>
        <name>GTP</name>
        <dbReference type="ChEBI" id="CHEBI:37565"/>
        <label>2</label>
    </ligand>
</feature>
<comment type="function">
    <text evidence="1">GTPase that plays an essential role in the late steps of ribosome biogenesis.</text>
</comment>
<comment type="subunit">
    <text evidence="1">Associates with the 50S ribosomal subunit.</text>
</comment>
<comment type="similarity">
    <text evidence="1">Belongs to the TRAFAC class TrmE-Era-EngA-EngB-Septin-like GTPase superfamily. EngA (Der) GTPase family.</text>
</comment>
<dbReference type="EMBL" id="AL591985">
    <property type="protein sequence ID" value="CAC49521.1"/>
    <property type="molecule type" value="Genomic_DNA"/>
</dbReference>
<dbReference type="PIR" id="A95982">
    <property type="entry name" value="A95982"/>
</dbReference>
<dbReference type="RefSeq" id="NP_437661.1">
    <property type="nucleotide sequence ID" value="NC_003078.1"/>
</dbReference>
<dbReference type="RefSeq" id="WP_010975953.1">
    <property type="nucleotide sequence ID" value="NC_003078.1"/>
</dbReference>
<dbReference type="SMR" id="Q92UK6"/>
<dbReference type="EnsemblBacteria" id="CAC49521">
    <property type="protein sequence ID" value="CAC49521"/>
    <property type="gene ID" value="SM_b20995"/>
</dbReference>
<dbReference type="KEGG" id="sme:SM_b20995"/>
<dbReference type="PATRIC" id="fig|266834.11.peg.6050"/>
<dbReference type="eggNOG" id="COG1160">
    <property type="taxonomic scope" value="Bacteria"/>
</dbReference>
<dbReference type="HOGENOM" id="CLU_016077_5_0_5"/>
<dbReference type="OrthoDB" id="9805918at2"/>
<dbReference type="Proteomes" id="UP000001976">
    <property type="component" value="Plasmid pSymB"/>
</dbReference>
<dbReference type="GO" id="GO:0005525">
    <property type="term" value="F:GTP binding"/>
    <property type="evidence" value="ECO:0007669"/>
    <property type="project" value="UniProtKB-UniRule"/>
</dbReference>
<dbReference type="GO" id="GO:0042254">
    <property type="term" value="P:ribosome biogenesis"/>
    <property type="evidence" value="ECO:0007669"/>
    <property type="project" value="UniProtKB-KW"/>
</dbReference>
<dbReference type="CDD" id="cd01894">
    <property type="entry name" value="EngA1"/>
    <property type="match status" value="1"/>
</dbReference>
<dbReference type="CDD" id="cd01895">
    <property type="entry name" value="EngA2"/>
    <property type="match status" value="1"/>
</dbReference>
<dbReference type="FunFam" id="3.30.300.20:FF:000004">
    <property type="entry name" value="GTPase Der"/>
    <property type="match status" value="1"/>
</dbReference>
<dbReference type="FunFam" id="3.40.50.300:FF:000057">
    <property type="entry name" value="GTPase Der"/>
    <property type="match status" value="1"/>
</dbReference>
<dbReference type="Gene3D" id="3.30.300.20">
    <property type="match status" value="1"/>
</dbReference>
<dbReference type="Gene3D" id="3.40.50.300">
    <property type="entry name" value="P-loop containing nucleotide triphosphate hydrolases"/>
    <property type="match status" value="2"/>
</dbReference>
<dbReference type="HAMAP" id="MF_00195">
    <property type="entry name" value="GTPase_Der"/>
    <property type="match status" value="1"/>
</dbReference>
<dbReference type="InterPro" id="IPR031166">
    <property type="entry name" value="G_ENGA"/>
</dbReference>
<dbReference type="InterPro" id="IPR006073">
    <property type="entry name" value="GTP-bd"/>
</dbReference>
<dbReference type="InterPro" id="IPR016484">
    <property type="entry name" value="GTPase_Der"/>
</dbReference>
<dbReference type="InterPro" id="IPR032859">
    <property type="entry name" value="KH_dom-like"/>
</dbReference>
<dbReference type="InterPro" id="IPR015946">
    <property type="entry name" value="KH_dom-like_a/b"/>
</dbReference>
<dbReference type="InterPro" id="IPR027417">
    <property type="entry name" value="P-loop_NTPase"/>
</dbReference>
<dbReference type="InterPro" id="IPR005225">
    <property type="entry name" value="Small_GTP-bd"/>
</dbReference>
<dbReference type="NCBIfam" id="TIGR03594">
    <property type="entry name" value="GTPase_EngA"/>
    <property type="match status" value="1"/>
</dbReference>
<dbReference type="NCBIfam" id="TIGR00231">
    <property type="entry name" value="small_GTP"/>
    <property type="match status" value="2"/>
</dbReference>
<dbReference type="PANTHER" id="PTHR43834">
    <property type="entry name" value="GTPASE DER"/>
    <property type="match status" value="1"/>
</dbReference>
<dbReference type="PANTHER" id="PTHR43834:SF6">
    <property type="entry name" value="GTPASE DER"/>
    <property type="match status" value="1"/>
</dbReference>
<dbReference type="Pfam" id="PF14714">
    <property type="entry name" value="KH_dom-like"/>
    <property type="match status" value="1"/>
</dbReference>
<dbReference type="Pfam" id="PF01926">
    <property type="entry name" value="MMR_HSR1"/>
    <property type="match status" value="2"/>
</dbReference>
<dbReference type="PIRSF" id="PIRSF006485">
    <property type="entry name" value="GTP-binding_EngA"/>
    <property type="match status" value="1"/>
</dbReference>
<dbReference type="PRINTS" id="PR00326">
    <property type="entry name" value="GTP1OBG"/>
</dbReference>
<dbReference type="SUPFAM" id="SSF52540">
    <property type="entry name" value="P-loop containing nucleoside triphosphate hydrolases"/>
    <property type="match status" value="2"/>
</dbReference>
<dbReference type="PROSITE" id="PS51712">
    <property type="entry name" value="G_ENGA"/>
    <property type="match status" value="2"/>
</dbReference>
<protein>
    <recommendedName>
        <fullName evidence="1">GTPase Der</fullName>
    </recommendedName>
    <alternativeName>
        <fullName evidence="1">GTP-binding protein EngA</fullName>
    </alternativeName>
</protein>
<keyword id="KW-0342">GTP-binding</keyword>
<keyword id="KW-0547">Nucleotide-binding</keyword>
<keyword id="KW-0614">Plasmid</keyword>
<keyword id="KW-1185">Reference proteome</keyword>
<keyword id="KW-0677">Repeat</keyword>
<keyword id="KW-0690">Ribosome biogenesis</keyword>
<evidence type="ECO:0000255" key="1">
    <source>
        <dbReference type="HAMAP-Rule" id="MF_00195"/>
    </source>
</evidence>
<accession>Q92UK6</accession>
<name>DER_RHIME</name>
<gene>
    <name evidence="1" type="primary">der</name>
    <name type="synonym">engA</name>
    <name type="ordered locus">RB1121</name>
    <name type="ORF">SMb20995</name>
</gene>
<proteinExistence type="inferred from homology"/>
<geneLocation type="plasmid">
    <name>pSymB</name>
    <name>megaplasmid 2</name>
</geneLocation>
<organism>
    <name type="scientific">Rhizobium meliloti (strain 1021)</name>
    <name type="common">Ensifer meliloti</name>
    <name type="synonym">Sinorhizobium meliloti</name>
    <dbReference type="NCBI Taxonomy" id="266834"/>
    <lineage>
        <taxon>Bacteria</taxon>
        <taxon>Pseudomonadati</taxon>
        <taxon>Pseudomonadota</taxon>
        <taxon>Alphaproteobacteria</taxon>
        <taxon>Hyphomicrobiales</taxon>
        <taxon>Rhizobiaceae</taxon>
        <taxon>Sinorhizobium/Ensifer group</taxon>
        <taxon>Sinorhizobium</taxon>
    </lineage>
</organism>
<sequence>MSFTVAIIGRPNVGKSTLFNRLVGKKLALVDDTPGVTRDRRPGDAKLVDLKFRIIDTAGLEESSPDSLQGRMWAQTEAAIDEADLSLFVVDAKAGLTPADQTLAEMLRRRGKPVVVVANKSEARGSEGGFYDAFTLGLGEPCPISAEHGQGMLDLRDAIVAALGEERAFPPAEDVAETNVDIRPVAGEGTEDEEVEPAYDETKPLRVAIVGRPNAGKSTLINRFLGEDRLLTGPEAGITRDSISVEWDWRGRTIKMFDTAGMRRKAKVQEKLEKLSVADALRAIRFAETVVIVFDATIPFEKQDLQIVDLVLREGRAAVLAFNKWDLVENWQALLVDLREKTERLLPQARGIRAVPISGHTGYGLDRLMQAIIETDKVWNRRISTARLNRWLESQQVQHPPPAVSGRRLKLKYMTQVKARPPGFMISCTRPEAVPESYTRYLINGLRNDFDLPGVPIRVHFRASENPFESKARKRR</sequence>
<reference key="1">
    <citation type="journal article" date="2001" name="Proc. Natl. Acad. Sci. U.S.A.">
        <title>The complete sequence of the 1,683-kb pSymB megaplasmid from the N2-fixing endosymbiont Sinorhizobium meliloti.</title>
        <authorList>
            <person name="Finan T.M."/>
            <person name="Weidner S."/>
            <person name="Wong K."/>
            <person name="Buhrmester J."/>
            <person name="Chain P."/>
            <person name="Vorhoelter F.J."/>
            <person name="Hernandez-Lucas I."/>
            <person name="Becker A."/>
            <person name="Cowie A."/>
            <person name="Gouzy J."/>
            <person name="Golding B."/>
            <person name="Puehler A."/>
        </authorList>
    </citation>
    <scope>NUCLEOTIDE SEQUENCE [LARGE SCALE GENOMIC DNA]</scope>
    <source>
        <strain>1021</strain>
    </source>
</reference>
<reference key="2">
    <citation type="journal article" date="2001" name="Science">
        <title>The composite genome of the legume symbiont Sinorhizobium meliloti.</title>
        <authorList>
            <person name="Galibert F."/>
            <person name="Finan T.M."/>
            <person name="Long S.R."/>
            <person name="Puehler A."/>
            <person name="Abola P."/>
            <person name="Ampe F."/>
            <person name="Barloy-Hubler F."/>
            <person name="Barnett M.J."/>
            <person name="Becker A."/>
            <person name="Boistard P."/>
            <person name="Bothe G."/>
            <person name="Boutry M."/>
            <person name="Bowser L."/>
            <person name="Buhrmester J."/>
            <person name="Cadieu E."/>
            <person name="Capela D."/>
            <person name="Chain P."/>
            <person name="Cowie A."/>
            <person name="Davis R.W."/>
            <person name="Dreano S."/>
            <person name="Federspiel N.A."/>
            <person name="Fisher R.F."/>
            <person name="Gloux S."/>
            <person name="Godrie T."/>
            <person name="Goffeau A."/>
            <person name="Golding B."/>
            <person name="Gouzy J."/>
            <person name="Gurjal M."/>
            <person name="Hernandez-Lucas I."/>
            <person name="Hong A."/>
            <person name="Huizar L."/>
            <person name="Hyman R.W."/>
            <person name="Jones T."/>
            <person name="Kahn D."/>
            <person name="Kahn M.L."/>
            <person name="Kalman S."/>
            <person name="Keating D.H."/>
            <person name="Kiss E."/>
            <person name="Komp C."/>
            <person name="Lelaure V."/>
            <person name="Masuy D."/>
            <person name="Palm C."/>
            <person name="Peck M.C."/>
            <person name="Pohl T.M."/>
            <person name="Portetelle D."/>
            <person name="Purnelle B."/>
            <person name="Ramsperger U."/>
            <person name="Surzycki R."/>
            <person name="Thebault P."/>
            <person name="Vandenbol M."/>
            <person name="Vorhoelter F.J."/>
            <person name="Weidner S."/>
            <person name="Wells D.H."/>
            <person name="Wong K."/>
            <person name="Yeh K.-C."/>
            <person name="Batut J."/>
        </authorList>
    </citation>
    <scope>NUCLEOTIDE SEQUENCE [LARGE SCALE GENOMIC DNA]</scope>
    <source>
        <strain>1021</strain>
    </source>
</reference>